<sequence>MLMSFNHPYQPYEIQLQLMQCIYGALSSGKKIAILESPTGTGKTLSLLCSSITWLRDNKLHLLSQNLNNGGIAINSSIELSDDDDFSDDEPNWVNESYNSSILDNKLLALNDYEKHLDTIANKHYKIDKNLIGNDNNNNKVKRRKIEHIPVGFEEDEFLPQDYISDSEELEQTKSEALSNEVKALLAKLDSKSNDEQTTSTELLQELNPVKIFFASRTHSQLKQFASQLKLPKFKSSFDEKFVSNERLKYLPLGSRKQLCINKSITSKWKSTEAINDACKELLQSEKGCPYHNKNTSNTLFRDHVFTGVHDIEDILALGESLNVCPYYATRDSITSAEIITLPYQYLLSESTRDSLNIDLSNSIVIVDEAHNLIDTINTIHSSHISLQELKTCQIGLQMYFAKFKSRLNAGNRVNLLKLIKLLDILIEYINKNFKKSGQEISANEIFNNTNADTLNIHKLNQFIKVSKIAYKIDTYLNSLSKESDNENNEESKNKSTPLLFKVASFLSSLTNPNEEGKFFFEKNKSIKYMLLEPSQSFKSILDEARCVILAGGTMEPISDFFDNLFPDIIKDKSVTFACDHVIPDDNLNTYIIEEPKFEFTFDKRQNPELVNKHLFQFFIKLSVNVPPTGGIVAFFPSYSYLQFVIDNWRSNGLFDKLNKIREIFYESKNGSDPLDEYIKVIEARNPAILFAVVGGKLSEGINFQDDLCRAVVMTGLPYPNVMSGELLIKKNHIETKILKNGGSKADVSCATKDFFDTICMKAVNQSVGRAIRHIDDYSNIYLLDQRYSNSKIKDKLSQWVRKRIQPETNLELIMEKSNRTFQTKKTSN</sequence>
<protein>
    <recommendedName>
        <fullName evidence="2">ATP-dependent DNA helicase CHL1</fullName>
        <ecNumber evidence="3">5.6.2.3</ecNumber>
    </recommendedName>
    <alternativeName>
        <fullName evidence="2">Chromosome loss protein 1</fullName>
    </alternativeName>
    <alternativeName>
        <fullName evidence="5">DNA 5'-3' helicase CHL1</fullName>
    </alternativeName>
</protein>
<reference key="1">
    <citation type="journal article" date="2007" name="Proc. Natl. Acad. Sci. U.S.A.">
        <title>Independent sorting-out of thousands of duplicated gene pairs in two yeast species descended from a whole-genome duplication.</title>
        <authorList>
            <person name="Scannell D.R."/>
            <person name="Frank A.C."/>
            <person name="Conant G.C."/>
            <person name="Byrne K.P."/>
            <person name="Woolfit M."/>
            <person name="Wolfe K.H."/>
        </authorList>
    </citation>
    <scope>NUCLEOTIDE SEQUENCE [LARGE SCALE GENOMIC DNA]</scope>
    <source>
        <strain>ATCC 22028 / DSM 70294 / BCRC 21397 / CBS 2163 / NBRC 10782 / NRRL Y-8283 / UCD 57-17</strain>
    </source>
</reference>
<comment type="function">
    <text evidence="2">ATP-dependent DNA helicase important for chromosome transmission and normal cell cycle progression in G(2)/M (By similarity). May have a role in changing DNA topology to allow the loading of proteins involved in maintaining sister chromatid cohesion in the vicinity of the centromeres (By similarity). Has a specific role in chromosome segregation during meiosis II (By similarity).</text>
</comment>
<comment type="catalytic activity">
    <reaction evidence="3">
        <text>Couples ATP hydrolysis with the unwinding of duplex DNA at the replication fork by translocating in the 5'-3' direction. This creates two antiparallel DNA single strands (ssDNA). The leading ssDNA polymer is the template for DNA polymerase III holoenzyme which synthesizes a continuous strand.</text>
        <dbReference type="EC" id="5.6.2.3"/>
    </reaction>
</comment>
<comment type="catalytic activity">
    <reaction evidence="3">
        <text>ATP + H2O = ADP + phosphate + H(+)</text>
        <dbReference type="Rhea" id="RHEA:13065"/>
        <dbReference type="ChEBI" id="CHEBI:15377"/>
        <dbReference type="ChEBI" id="CHEBI:15378"/>
        <dbReference type="ChEBI" id="CHEBI:30616"/>
        <dbReference type="ChEBI" id="CHEBI:43474"/>
        <dbReference type="ChEBI" id="CHEBI:456216"/>
        <dbReference type="EC" id="5.6.2.3"/>
    </reaction>
</comment>
<comment type="cofactor">
    <cofactor evidence="1">
        <name>[4Fe-4S] cluster</name>
        <dbReference type="ChEBI" id="CHEBI:49883"/>
    </cofactor>
    <text evidence="1">Binds 1 [4Fe-4S] cluster.</text>
</comment>
<comment type="subcellular location">
    <subcellularLocation>
        <location evidence="2">Nucleus</location>
    </subcellularLocation>
</comment>
<comment type="similarity">
    <text evidence="5">Belongs to the DEAD box helicase family. DEAH subfamily. DDX11/CHL1 sub-subfamily.</text>
</comment>
<accession>A7TTL0</accession>
<organism>
    <name type="scientific">Vanderwaltozyma polyspora (strain ATCC 22028 / DSM 70294 / BCRC 21397 / CBS 2163 / NBRC 10782 / NRRL Y-8283 / UCD 57-17)</name>
    <name type="common">Kluyveromyces polysporus</name>
    <dbReference type="NCBI Taxonomy" id="436907"/>
    <lineage>
        <taxon>Eukaryota</taxon>
        <taxon>Fungi</taxon>
        <taxon>Dikarya</taxon>
        <taxon>Ascomycota</taxon>
        <taxon>Saccharomycotina</taxon>
        <taxon>Saccharomycetes</taxon>
        <taxon>Saccharomycetales</taxon>
        <taxon>Saccharomycetaceae</taxon>
        <taxon>Vanderwaltozyma</taxon>
    </lineage>
</organism>
<dbReference type="EC" id="5.6.2.3" evidence="3"/>
<dbReference type="EMBL" id="DS480585">
    <property type="protein sequence ID" value="EDO14396.1"/>
    <property type="molecule type" value="Genomic_DNA"/>
</dbReference>
<dbReference type="RefSeq" id="XP_001642254.1">
    <property type="nucleotide sequence ID" value="XM_001642204.1"/>
</dbReference>
<dbReference type="FunCoup" id="A7TTL0">
    <property type="interactions" value="1013"/>
</dbReference>
<dbReference type="STRING" id="436907.A7TTL0"/>
<dbReference type="GeneID" id="5542382"/>
<dbReference type="KEGG" id="vpo:Kpol_187p1"/>
<dbReference type="eggNOG" id="KOG1133">
    <property type="taxonomic scope" value="Eukaryota"/>
</dbReference>
<dbReference type="HOGENOM" id="CLU_006515_2_0_1"/>
<dbReference type="InParanoid" id="A7TTL0"/>
<dbReference type="OMA" id="QTHQFRD"/>
<dbReference type="OrthoDB" id="267079at2759"/>
<dbReference type="PhylomeDB" id="A7TTL0"/>
<dbReference type="Proteomes" id="UP000000267">
    <property type="component" value="Unassembled WGS sequence"/>
</dbReference>
<dbReference type="GO" id="GO:0000785">
    <property type="term" value="C:chromatin"/>
    <property type="evidence" value="ECO:0007669"/>
    <property type="project" value="EnsemblFungi"/>
</dbReference>
<dbReference type="GO" id="GO:0005634">
    <property type="term" value="C:nucleus"/>
    <property type="evidence" value="ECO:0007669"/>
    <property type="project" value="UniProtKB-SubCell"/>
</dbReference>
<dbReference type="GO" id="GO:0005524">
    <property type="term" value="F:ATP binding"/>
    <property type="evidence" value="ECO:0007669"/>
    <property type="project" value="UniProtKB-KW"/>
</dbReference>
<dbReference type="GO" id="GO:0016887">
    <property type="term" value="F:ATP hydrolysis activity"/>
    <property type="evidence" value="ECO:0007669"/>
    <property type="project" value="RHEA"/>
</dbReference>
<dbReference type="GO" id="GO:0003677">
    <property type="term" value="F:DNA binding"/>
    <property type="evidence" value="ECO:0007669"/>
    <property type="project" value="UniProtKB-KW"/>
</dbReference>
<dbReference type="GO" id="GO:0003678">
    <property type="term" value="F:DNA helicase activity"/>
    <property type="evidence" value="ECO:0007669"/>
    <property type="project" value="EnsemblFungi"/>
</dbReference>
<dbReference type="GO" id="GO:0051536">
    <property type="term" value="F:iron-sulfur cluster binding"/>
    <property type="evidence" value="ECO:0007669"/>
    <property type="project" value="UniProtKB-KW"/>
</dbReference>
<dbReference type="GO" id="GO:0046872">
    <property type="term" value="F:metal ion binding"/>
    <property type="evidence" value="ECO:0007669"/>
    <property type="project" value="UniProtKB-KW"/>
</dbReference>
<dbReference type="GO" id="GO:0034085">
    <property type="term" value="P:establishment of sister chromatid cohesion"/>
    <property type="evidence" value="ECO:0007669"/>
    <property type="project" value="EnsemblFungi"/>
</dbReference>
<dbReference type="GO" id="GO:0036297">
    <property type="term" value="P:interstrand cross-link repair"/>
    <property type="evidence" value="ECO:0007669"/>
    <property type="project" value="EnsemblFungi"/>
</dbReference>
<dbReference type="GO" id="GO:0031571">
    <property type="term" value="P:mitotic G1 DNA damage checkpoint signaling"/>
    <property type="evidence" value="ECO:0007669"/>
    <property type="project" value="EnsemblFungi"/>
</dbReference>
<dbReference type="GO" id="GO:0007064">
    <property type="term" value="P:mitotic sister chromatid cohesion"/>
    <property type="evidence" value="ECO:0007669"/>
    <property type="project" value="EnsemblFungi"/>
</dbReference>
<dbReference type="FunFam" id="3.40.50.300:FF:001372">
    <property type="entry name" value="ATP-dependent DNA helicase chl1"/>
    <property type="match status" value="1"/>
</dbReference>
<dbReference type="Gene3D" id="3.40.50.300">
    <property type="entry name" value="P-loop containing nucleotide triphosphate hydrolases"/>
    <property type="match status" value="3"/>
</dbReference>
<dbReference type="InterPro" id="IPR006555">
    <property type="entry name" value="ATP-dep_Helicase_C"/>
</dbReference>
<dbReference type="InterPro" id="IPR045028">
    <property type="entry name" value="DinG/Rad3-like"/>
</dbReference>
<dbReference type="InterPro" id="IPR002464">
    <property type="entry name" value="DNA/RNA_helicase_DEAH_CS"/>
</dbReference>
<dbReference type="InterPro" id="IPR014013">
    <property type="entry name" value="Helic_SF1/SF2_ATP-bd_DinG/Rad3"/>
</dbReference>
<dbReference type="InterPro" id="IPR006554">
    <property type="entry name" value="Helicase-like_DEXD_c2"/>
</dbReference>
<dbReference type="InterPro" id="IPR027417">
    <property type="entry name" value="P-loop_NTPase"/>
</dbReference>
<dbReference type="InterPro" id="IPR010614">
    <property type="entry name" value="RAD3-like_helicase_DEAD"/>
</dbReference>
<dbReference type="InterPro" id="IPR013020">
    <property type="entry name" value="Rad3/Chl1-like"/>
</dbReference>
<dbReference type="NCBIfam" id="TIGR00604">
    <property type="entry name" value="rad3"/>
    <property type="match status" value="1"/>
</dbReference>
<dbReference type="PANTHER" id="PTHR11472:SF41">
    <property type="entry name" value="ATP-DEPENDENT DNA HELICASE DDX11-RELATED"/>
    <property type="match status" value="1"/>
</dbReference>
<dbReference type="PANTHER" id="PTHR11472">
    <property type="entry name" value="DNA REPAIR DEAD HELICASE RAD3/XP-D SUBFAMILY MEMBER"/>
    <property type="match status" value="1"/>
</dbReference>
<dbReference type="Pfam" id="PF06733">
    <property type="entry name" value="DEAD_2"/>
    <property type="match status" value="1"/>
</dbReference>
<dbReference type="Pfam" id="PF13307">
    <property type="entry name" value="Helicase_C_2"/>
    <property type="match status" value="1"/>
</dbReference>
<dbReference type="SMART" id="SM00488">
    <property type="entry name" value="DEXDc2"/>
    <property type="match status" value="1"/>
</dbReference>
<dbReference type="SMART" id="SM00491">
    <property type="entry name" value="HELICc2"/>
    <property type="match status" value="1"/>
</dbReference>
<dbReference type="SUPFAM" id="SSF52540">
    <property type="entry name" value="P-loop containing nucleoside triphosphate hydrolases"/>
    <property type="match status" value="2"/>
</dbReference>
<dbReference type="PROSITE" id="PS00690">
    <property type="entry name" value="DEAH_ATP_HELICASE"/>
    <property type="match status" value="1"/>
</dbReference>
<dbReference type="PROSITE" id="PS51193">
    <property type="entry name" value="HELICASE_ATP_BIND_2"/>
    <property type="match status" value="1"/>
</dbReference>
<proteinExistence type="inferred from homology"/>
<evidence type="ECO:0000250" key="1">
    <source>
        <dbReference type="UniProtKB" id="P18074"/>
    </source>
</evidence>
<evidence type="ECO:0000250" key="2">
    <source>
        <dbReference type="UniProtKB" id="P22516"/>
    </source>
</evidence>
<evidence type="ECO:0000250" key="3">
    <source>
        <dbReference type="UniProtKB" id="Q96FC9"/>
    </source>
</evidence>
<evidence type="ECO:0000255" key="4">
    <source>
        <dbReference type="PROSITE-ProRule" id="PRU00541"/>
    </source>
</evidence>
<evidence type="ECO:0000305" key="5"/>
<feature type="chain" id="PRO_0000351018" description="ATP-dependent DNA helicase CHL1">
    <location>
        <begin position="1"/>
        <end position="829"/>
    </location>
</feature>
<feature type="domain" description="Helicase ATP-binding" evidence="4">
    <location>
        <begin position="1"/>
        <end position="433"/>
    </location>
</feature>
<feature type="short sequence motif" description="DEAH box">
    <location>
        <begin position="368"/>
        <end position="371"/>
    </location>
</feature>
<feature type="binding site" evidence="4">
    <location>
        <begin position="37"/>
        <end position="44"/>
    </location>
    <ligand>
        <name>ATP</name>
        <dbReference type="ChEBI" id="CHEBI:30616"/>
    </ligand>
</feature>
<feature type="binding site" evidence="1">
    <location>
        <position position="260"/>
    </location>
    <ligand>
        <name>[4Fe-4S] cluster</name>
        <dbReference type="ChEBI" id="CHEBI:49883"/>
    </ligand>
</feature>
<feature type="binding site" evidence="1">
    <location>
        <position position="279"/>
    </location>
    <ligand>
        <name>[4Fe-4S] cluster</name>
        <dbReference type="ChEBI" id="CHEBI:49883"/>
    </ligand>
</feature>
<feature type="binding site" evidence="1">
    <location>
        <position position="289"/>
    </location>
    <ligand>
        <name>[4Fe-4S] cluster</name>
        <dbReference type="ChEBI" id="CHEBI:49883"/>
    </ligand>
</feature>
<feature type="binding site" evidence="1">
    <location>
        <position position="325"/>
    </location>
    <ligand>
        <name>[4Fe-4S] cluster</name>
        <dbReference type="ChEBI" id="CHEBI:49883"/>
    </ligand>
</feature>
<gene>
    <name type="primary">CHL1</name>
    <name type="ORF">Kpol_187p1</name>
</gene>
<keyword id="KW-0067">ATP-binding</keyword>
<keyword id="KW-0131">Cell cycle</keyword>
<keyword id="KW-0238">DNA-binding</keyword>
<keyword id="KW-0347">Helicase</keyword>
<keyword id="KW-0378">Hydrolase</keyword>
<keyword id="KW-0408">Iron</keyword>
<keyword id="KW-0411">Iron-sulfur</keyword>
<keyword id="KW-0413">Isomerase</keyword>
<keyword id="KW-0479">Metal-binding</keyword>
<keyword id="KW-0547">Nucleotide-binding</keyword>
<keyword id="KW-0539">Nucleus</keyword>
<keyword id="KW-1185">Reference proteome</keyword>
<name>CHL1_VANPO</name>